<protein>
    <recommendedName>
        <fullName evidence="1">S-adenosylmethionine:tRNA ribosyltransferase-isomerase</fullName>
        <ecNumber evidence="1">2.4.99.17</ecNumber>
    </recommendedName>
    <alternativeName>
        <fullName evidence="1">Queuosine biosynthesis protein QueA</fullName>
    </alternativeName>
</protein>
<organism>
    <name type="scientific">Rickettsia akari (strain Hartford)</name>
    <dbReference type="NCBI Taxonomy" id="293614"/>
    <lineage>
        <taxon>Bacteria</taxon>
        <taxon>Pseudomonadati</taxon>
        <taxon>Pseudomonadota</taxon>
        <taxon>Alphaproteobacteria</taxon>
        <taxon>Rickettsiales</taxon>
        <taxon>Rickettsiaceae</taxon>
        <taxon>Rickettsieae</taxon>
        <taxon>Rickettsia</taxon>
        <taxon>spotted fever group</taxon>
    </lineage>
</organism>
<proteinExistence type="inferred from homology"/>
<dbReference type="EC" id="2.4.99.17" evidence="1"/>
<dbReference type="EMBL" id="CP000847">
    <property type="protein sequence ID" value="ABV74628.1"/>
    <property type="molecule type" value="Genomic_DNA"/>
</dbReference>
<dbReference type="RefSeq" id="WP_012149262.1">
    <property type="nucleotide sequence ID" value="NC_009881.1"/>
</dbReference>
<dbReference type="SMR" id="A8GMK3"/>
<dbReference type="STRING" id="293614.A1C_01585"/>
<dbReference type="KEGG" id="rak:A1C_01585"/>
<dbReference type="eggNOG" id="COG0809">
    <property type="taxonomic scope" value="Bacteria"/>
</dbReference>
<dbReference type="HOGENOM" id="CLU_039110_1_0_5"/>
<dbReference type="UniPathway" id="UPA00392"/>
<dbReference type="Proteomes" id="UP000006830">
    <property type="component" value="Chromosome"/>
</dbReference>
<dbReference type="GO" id="GO:0005737">
    <property type="term" value="C:cytoplasm"/>
    <property type="evidence" value="ECO:0007669"/>
    <property type="project" value="UniProtKB-SubCell"/>
</dbReference>
<dbReference type="GO" id="GO:0051075">
    <property type="term" value="F:S-adenosylmethionine:tRNA ribosyltransferase-isomerase activity"/>
    <property type="evidence" value="ECO:0007669"/>
    <property type="project" value="UniProtKB-EC"/>
</dbReference>
<dbReference type="GO" id="GO:0008616">
    <property type="term" value="P:queuosine biosynthetic process"/>
    <property type="evidence" value="ECO:0007669"/>
    <property type="project" value="UniProtKB-UniRule"/>
</dbReference>
<dbReference type="GO" id="GO:0002099">
    <property type="term" value="P:tRNA wobble guanine modification"/>
    <property type="evidence" value="ECO:0007669"/>
    <property type="project" value="TreeGrafter"/>
</dbReference>
<dbReference type="FunFam" id="3.40.1780.10:FF:000001">
    <property type="entry name" value="S-adenosylmethionine:tRNA ribosyltransferase-isomerase"/>
    <property type="match status" value="1"/>
</dbReference>
<dbReference type="Gene3D" id="2.40.10.240">
    <property type="entry name" value="QueA-like"/>
    <property type="match status" value="1"/>
</dbReference>
<dbReference type="Gene3D" id="3.40.1780.10">
    <property type="entry name" value="QueA-like"/>
    <property type="match status" value="1"/>
</dbReference>
<dbReference type="HAMAP" id="MF_00113">
    <property type="entry name" value="QueA"/>
    <property type="match status" value="1"/>
</dbReference>
<dbReference type="InterPro" id="IPR003699">
    <property type="entry name" value="QueA"/>
</dbReference>
<dbReference type="InterPro" id="IPR042118">
    <property type="entry name" value="QueA_dom1"/>
</dbReference>
<dbReference type="InterPro" id="IPR042119">
    <property type="entry name" value="QueA_dom2"/>
</dbReference>
<dbReference type="InterPro" id="IPR036100">
    <property type="entry name" value="QueA_sf"/>
</dbReference>
<dbReference type="NCBIfam" id="NF002398">
    <property type="entry name" value="PRK01424.1"/>
    <property type="match status" value="1"/>
</dbReference>
<dbReference type="PANTHER" id="PTHR30307">
    <property type="entry name" value="S-ADENOSYLMETHIONINE:TRNA RIBOSYLTRANSFERASE-ISOMERASE"/>
    <property type="match status" value="1"/>
</dbReference>
<dbReference type="PANTHER" id="PTHR30307:SF0">
    <property type="entry name" value="S-ADENOSYLMETHIONINE:TRNA RIBOSYLTRANSFERASE-ISOMERASE"/>
    <property type="match status" value="1"/>
</dbReference>
<dbReference type="Pfam" id="PF02547">
    <property type="entry name" value="Queuosine_synth"/>
    <property type="match status" value="1"/>
</dbReference>
<dbReference type="SUPFAM" id="SSF111337">
    <property type="entry name" value="QueA-like"/>
    <property type="match status" value="1"/>
</dbReference>
<reference key="1">
    <citation type="submission" date="2007-09" db="EMBL/GenBank/DDBJ databases">
        <title>Complete genome sequence of Rickettsia akari.</title>
        <authorList>
            <person name="Madan A."/>
            <person name="Fahey J."/>
            <person name="Helton E."/>
            <person name="Ketteman M."/>
            <person name="Madan A."/>
            <person name="Rodrigues S."/>
            <person name="Sanchez A."/>
            <person name="Whiting M."/>
            <person name="Dasch G."/>
            <person name="Eremeeva M."/>
        </authorList>
    </citation>
    <scope>NUCLEOTIDE SEQUENCE [LARGE SCALE GENOMIC DNA]</scope>
    <source>
        <strain>Hartford</strain>
    </source>
</reference>
<sequence>MKLSAFDFNLPSELIAQSPSSERDNSDLLIAAMPPIKTKFYNIIDYLKEGDLLVLNNSKVIKAKLHLWKNVTINLNQKLSDDSWSAFAKPTRKLHVNDEFYFDNHKVIITEKLVMGEIKVKFDLDNISVFEFLDKYGEMPLPVYIRRSHSLYHTTSTLCHTRENGYSEKLDAFFRRNDIKDKDNDIVYDNERYQTIYSQIEGSVAAPTAGLHFTNDILDKLKTKGIHTAFLTLHVGAGTFLPVKTENIHEHKMHTEYCSITPETAEIINKAKQERRRIIAVGTTTLRTVESFCNNGIIKAGSFETDIFITPGFKFQTADMLLTNFHFPKSTLFMLICAFAGFKEMHELYKYAIKEKMRFFSYGDATLLYRK</sequence>
<comment type="function">
    <text evidence="1">Transfers and isomerizes the ribose moiety from AdoMet to the 7-aminomethyl group of 7-deazaguanine (preQ1-tRNA) to give epoxyqueuosine (oQ-tRNA).</text>
</comment>
<comment type="catalytic activity">
    <reaction evidence="1">
        <text>7-aminomethyl-7-carbaguanosine(34) in tRNA + S-adenosyl-L-methionine = epoxyqueuosine(34) in tRNA + adenine + L-methionine + 2 H(+)</text>
        <dbReference type="Rhea" id="RHEA:32155"/>
        <dbReference type="Rhea" id="RHEA-COMP:10342"/>
        <dbReference type="Rhea" id="RHEA-COMP:18582"/>
        <dbReference type="ChEBI" id="CHEBI:15378"/>
        <dbReference type="ChEBI" id="CHEBI:16708"/>
        <dbReference type="ChEBI" id="CHEBI:57844"/>
        <dbReference type="ChEBI" id="CHEBI:59789"/>
        <dbReference type="ChEBI" id="CHEBI:82833"/>
        <dbReference type="ChEBI" id="CHEBI:194443"/>
        <dbReference type="EC" id="2.4.99.17"/>
    </reaction>
</comment>
<comment type="pathway">
    <text evidence="1">tRNA modification; tRNA-queuosine biosynthesis.</text>
</comment>
<comment type="subunit">
    <text evidence="1">Monomer.</text>
</comment>
<comment type="subcellular location">
    <subcellularLocation>
        <location evidence="1">Cytoplasm</location>
    </subcellularLocation>
</comment>
<comment type="similarity">
    <text evidence="1">Belongs to the QueA family.</text>
</comment>
<gene>
    <name evidence="1" type="primary">queA</name>
    <name type="ordered locus">A1C_01585</name>
</gene>
<accession>A8GMK3</accession>
<evidence type="ECO:0000255" key="1">
    <source>
        <dbReference type="HAMAP-Rule" id="MF_00113"/>
    </source>
</evidence>
<name>QUEA_RICAH</name>
<feature type="chain" id="PRO_1000015260" description="S-adenosylmethionine:tRNA ribosyltransferase-isomerase">
    <location>
        <begin position="1"/>
        <end position="371"/>
    </location>
</feature>
<keyword id="KW-0963">Cytoplasm</keyword>
<keyword id="KW-0671">Queuosine biosynthesis</keyword>
<keyword id="KW-0949">S-adenosyl-L-methionine</keyword>
<keyword id="KW-0808">Transferase</keyword>